<dbReference type="EC" id="1.17.4.1"/>
<dbReference type="EMBL" id="L42023">
    <property type="protein sequence ID" value="AAC23305.1"/>
    <property type="status" value="ALT_INIT"/>
    <property type="molecule type" value="Genomic_DNA"/>
</dbReference>
<dbReference type="PIR" id="B64135">
    <property type="entry name" value="B64135"/>
</dbReference>
<dbReference type="RefSeq" id="NP_439801.2">
    <property type="nucleotide sequence ID" value="NC_000907.1"/>
</dbReference>
<dbReference type="SMR" id="P43754"/>
<dbReference type="STRING" id="71421.HI_1659"/>
<dbReference type="EnsemblBacteria" id="AAC23305">
    <property type="protein sequence ID" value="AAC23305"/>
    <property type="gene ID" value="HI_1659"/>
</dbReference>
<dbReference type="KEGG" id="hin:HI_1659"/>
<dbReference type="PATRIC" id="fig|71421.8.peg.1737"/>
<dbReference type="eggNOG" id="COG0209">
    <property type="taxonomic scope" value="Bacteria"/>
</dbReference>
<dbReference type="HOGENOM" id="CLU_000404_3_0_6"/>
<dbReference type="OrthoDB" id="9762933at2"/>
<dbReference type="PhylomeDB" id="P43754"/>
<dbReference type="BioCyc" id="HINF71421:G1GJ1-1676-MONOMER"/>
<dbReference type="Proteomes" id="UP000000579">
    <property type="component" value="Chromosome"/>
</dbReference>
<dbReference type="GO" id="GO:0005971">
    <property type="term" value="C:ribonucleoside-diphosphate reductase complex"/>
    <property type="evidence" value="ECO:0000318"/>
    <property type="project" value="GO_Central"/>
</dbReference>
<dbReference type="GO" id="GO:0005524">
    <property type="term" value="F:ATP binding"/>
    <property type="evidence" value="ECO:0000318"/>
    <property type="project" value="GO_Central"/>
</dbReference>
<dbReference type="GO" id="GO:0004748">
    <property type="term" value="F:ribonucleoside-diphosphate reductase activity, thioredoxin disulfide as acceptor"/>
    <property type="evidence" value="ECO:0000318"/>
    <property type="project" value="GO_Central"/>
</dbReference>
<dbReference type="GO" id="GO:0009263">
    <property type="term" value="P:deoxyribonucleotide biosynthetic process"/>
    <property type="evidence" value="ECO:0000318"/>
    <property type="project" value="GO_Central"/>
</dbReference>
<dbReference type="FunFam" id="1.10.1650.20:FF:000001">
    <property type="entry name" value="Ribonucleoside-diphosphate reductase"/>
    <property type="match status" value="1"/>
</dbReference>
<dbReference type="Gene3D" id="1.10.1650.20">
    <property type="match status" value="1"/>
</dbReference>
<dbReference type="Gene3D" id="3.20.70.20">
    <property type="match status" value="1"/>
</dbReference>
<dbReference type="InterPro" id="IPR005144">
    <property type="entry name" value="ATP-cone_dom"/>
</dbReference>
<dbReference type="InterPro" id="IPR013346">
    <property type="entry name" value="NrdE_NrdA_C"/>
</dbReference>
<dbReference type="InterPro" id="IPR000788">
    <property type="entry name" value="RNR_lg_C"/>
</dbReference>
<dbReference type="InterPro" id="IPR013509">
    <property type="entry name" value="RNR_lsu_N"/>
</dbReference>
<dbReference type="InterPro" id="IPR008926">
    <property type="entry name" value="RNR_R1-su_N"/>
</dbReference>
<dbReference type="InterPro" id="IPR039718">
    <property type="entry name" value="Rrm1"/>
</dbReference>
<dbReference type="NCBIfam" id="TIGR02506">
    <property type="entry name" value="NrdE_NrdA"/>
    <property type="match status" value="1"/>
</dbReference>
<dbReference type="NCBIfam" id="NF006578">
    <property type="entry name" value="PRK09103.1"/>
    <property type="match status" value="1"/>
</dbReference>
<dbReference type="PANTHER" id="PTHR11573">
    <property type="entry name" value="RIBONUCLEOSIDE-DIPHOSPHATE REDUCTASE LARGE CHAIN"/>
    <property type="match status" value="1"/>
</dbReference>
<dbReference type="PANTHER" id="PTHR11573:SF6">
    <property type="entry name" value="RIBONUCLEOSIDE-DIPHOSPHATE REDUCTASE LARGE SUBUNIT"/>
    <property type="match status" value="1"/>
</dbReference>
<dbReference type="Pfam" id="PF03477">
    <property type="entry name" value="ATP-cone"/>
    <property type="match status" value="1"/>
</dbReference>
<dbReference type="Pfam" id="PF02867">
    <property type="entry name" value="Ribonuc_red_lgC"/>
    <property type="match status" value="1"/>
</dbReference>
<dbReference type="Pfam" id="PF00317">
    <property type="entry name" value="Ribonuc_red_lgN"/>
    <property type="match status" value="1"/>
</dbReference>
<dbReference type="PRINTS" id="PR01183">
    <property type="entry name" value="RIBORDTASEM1"/>
</dbReference>
<dbReference type="SUPFAM" id="SSF51998">
    <property type="entry name" value="PFL-like glycyl radical enzymes"/>
    <property type="match status" value="1"/>
</dbReference>
<dbReference type="SUPFAM" id="SSF48168">
    <property type="entry name" value="R1 subunit of ribonucleotide reductase, N-terminal domain"/>
    <property type="match status" value="1"/>
</dbReference>
<dbReference type="PROSITE" id="PS51161">
    <property type="entry name" value="ATP_CONE"/>
    <property type="match status" value="1"/>
</dbReference>
<dbReference type="PROSITE" id="PS00089">
    <property type="entry name" value="RIBORED_LARGE"/>
    <property type="match status" value="1"/>
</dbReference>
<protein>
    <recommendedName>
        <fullName>Ribonucleoside-diphosphate reductase subunit alpha</fullName>
        <ecNumber>1.17.4.1</ecNumber>
    </recommendedName>
    <alternativeName>
        <fullName>Ribonucleotide reductase</fullName>
    </alternativeName>
</protein>
<comment type="function">
    <text evidence="1">Provides the precursors necessary for DNA synthesis. Catalyzes the biosynthesis of deoxyribonucleotides from the corresponding ribonucleotides (By similarity).</text>
</comment>
<comment type="catalytic activity">
    <reaction>
        <text>a 2'-deoxyribonucleoside 5'-diphosphate + [thioredoxin]-disulfide + H2O = a ribonucleoside 5'-diphosphate + [thioredoxin]-dithiol</text>
        <dbReference type="Rhea" id="RHEA:23252"/>
        <dbReference type="Rhea" id="RHEA-COMP:10698"/>
        <dbReference type="Rhea" id="RHEA-COMP:10700"/>
        <dbReference type="ChEBI" id="CHEBI:15377"/>
        <dbReference type="ChEBI" id="CHEBI:29950"/>
        <dbReference type="ChEBI" id="CHEBI:50058"/>
        <dbReference type="ChEBI" id="CHEBI:57930"/>
        <dbReference type="ChEBI" id="CHEBI:73316"/>
        <dbReference type="EC" id="1.17.4.1"/>
    </reaction>
</comment>
<comment type="activity regulation">
    <text evidence="1">Under complex allosteric control mediated by deoxynucleoside triphosphates and ATP binding to separate specificity and activation sites on the alpha subunit. The type of nucleotide bound at the specificity site determines substrate preference. It seems probable that ATP makes the enzyme reduce CDP and UDP, dGTP favors ADP reduction and dTTP favors GDP reduction. Stimulated by ATP and inhibited by dATP binding to the activity site (By similarity).</text>
</comment>
<comment type="subunit">
    <text evidence="1">Tetramer of two alpha and two beta subunits.</text>
</comment>
<comment type="similarity">
    <text evidence="4">Belongs to the ribonucleoside diphosphate reductase large chain family.</text>
</comment>
<comment type="sequence caution" evidence="4">
    <conflict type="erroneous initiation">
        <sequence resource="EMBL-CDS" id="AAC23305"/>
    </conflict>
    <text>Truncated N-terminus.</text>
</comment>
<name>RIR1_HAEIN</name>
<accession>P43754</accession>
<reference key="1">
    <citation type="journal article" date="1995" name="Science">
        <title>Whole-genome random sequencing and assembly of Haemophilus influenzae Rd.</title>
        <authorList>
            <person name="Fleischmann R.D."/>
            <person name="Adams M.D."/>
            <person name="White O."/>
            <person name="Clayton R.A."/>
            <person name="Kirkness E.F."/>
            <person name="Kerlavage A.R."/>
            <person name="Bult C.J."/>
            <person name="Tomb J.-F."/>
            <person name="Dougherty B.A."/>
            <person name="Merrick J.M."/>
            <person name="McKenney K."/>
            <person name="Sutton G.G."/>
            <person name="FitzHugh W."/>
            <person name="Fields C.A."/>
            <person name="Gocayne J.D."/>
            <person name="Scott J.D."/>
            <person name="Shirley R."/>
            <person name="Liu L.-I."/>
            <person name="Glodek A."/>
            <person name="Kelley J.M."/>
            <person name="Weidman J.F."/>
            <person name="Phillips C.A."/>
            <person name="Spriggs T."/>
            <person name="Hedblom E."/>
            <person name="Cotton M.D."/>
            <person name="Utterback T.R."/>
            <person name="Hanna M.C."/>
            <person name="Nguyen D.T."/>
            <person name="Saudek D.M."/>
            <person name="Brandon R.C."/>
            <person name="Fine L.D."/>
            <person name="Fritchman J.L."/>
            <person name="Fuhrmann J.L."/>
            <person name="Geoghagen N.S.M."/>
            <person name="Gnehm C.L."/>
            <person name="McDonald L.A."/>
            <person name="Small K.V."/>
            <person name="Fraser C.M."/>
            <person name="Smith H.O."/>
            <person name="Venter J.C."/>
        </authorList>
    </citation>
    <scope>NUCLEOTIDE SEQUENCE [LARGE SCALE GENOMIC DNA]</scope>
    <source>
        <strain>ATCC 51907 / DSM 11121 / KW20 / Rd</strain>
    </source>
</reference>
<sequence length="756" mass="85696">MNKSLMVTKRDGTQEQINLDKIHRVITWAAEGLDNVSVSQVELRSHIQFYEGIRTSDIHETIIKAAADLISKDSPDYQYLAARLAIFHLRKKAYGHFDPPRLYDHVKKLVRMEKYDQALLDDYTREEWDTMDGFIDHWRDMTFSYAAVKQLEGKYLVQNRVTGEIYESAQFLYLLVSASLFSKYPKETRLDYVKRFYDATSTFKISLPTPIMAGVRTPTRQFSSCVLIECDDSLDSINATASAIVKYVSQRAGIGINAGAIRALGSEIRGGEAFHTGCIPFYKYFQTAVKSCSQGGVRGGAATLYYPIWHLEAENLLVLKNNRGVEDNRVRHMDYGVQLNKLMYQRLIKGSEITLFSPSDVPGLYEAFFADQDKFEELYVKYEQDPTIRKRTVKAVEIFSLLMQERASTGRIYIQNVDHCNTHSPFDPQVAPVRQSNLCLEIALPTKPLQHINDENGEIALCTLSAFNLGKIENLDELEELADLAVRSLDALLDYQDYPVVAAKRSSLARRSLGIGVINYAYYLAKNGVRYSDGSANDLTHRTFEAIQYYLLKASMNLAKEQGACEYFNETTYAKGILPIDTYKKDLDSLTQEPLHYDWESLRKDIQEFGLRNSTLTALMPSETSSQISNATNGIEPPRGHVSIKASKDGILKQVVPEYENLMDNYELLWDIPSNDGYLHLVGIMQKFVDQAISANTNYDPKRFEDGKVPMKVLLKDLLTAYKYGLKTLYYQNTRDGAEDVQEDLDDGCAGGACKI</sequence>
<gene>
    <name type="primary">nrdA</name>
    <name type="ordered locus">HI_1659</name>
</gene>
<organism>
    <name type="scientific">Haemophilus influenzae (strain ATCC 51907 / DSM 11121 / KW20 / Rd)</name>
    <dbReference type="NCBI Taxonomy" id="71421"/>
    <lineage>
        <taxon>Bacteria</taxon>
        <taxon>Pseudomonadati</taxon>
        <taxon>Pseudomonadota</taxon>
        <taxon>Gammaproteobacteria</taxon>
        <taxon>Pasteurellales</taxon>
        <taxon>Pasteurellaceae</taxon>
        <taxon>Haemophilus</taxon>
    </lineage>
</organism>
<feature type="chain" id="PRO_0000187214" description="Ribonucleoside-diphosphate reductase subunit alpha">
    <location>
        <begin position="1"/>
        <end position="756"/>
    </location>
</feature>
<feature type="domain" description="ATP-cone" evidence="3">
    <location>
        <begin position="5"/>
        <end position="95"/>
    </location>
</feature>
<feature type="active site" description="Proton acceptor" evidence="1">
    <location>
        <position position="437"/>
    </location>
</feature>
<feature type="active site" description="Cysteine radical intermediate" evidence="1">
    <location>
        <position position="439"/>
    </location>
</feature>
<feature type="active site" description="Proton acceptor" evidence="1">
    <location>
        <position position="441"/>
    </location>
</feature>
<feature type="binding site" evidence="2">
    <location>
        <position position="9"/>
    </location>
    <ligand>
        <name>ATP</name>
        <dbReference type="ChEBI" id="CHEBI:30616"/>
        <note>allosteric activator</note>
    </ligand>
</feature>
<feature type="binding site" evidence="2">
    <location>
        <begin position="15"/>
        <end position="21"/>
    </location>
    <ligand>
        <name>ATP</name>
        <dbReference type="ChEBI" id="CHEBI:30616"/>
        <note>allosteric activator</note>
    </ligand>
</feature>
<feature type="binding site" evidence="2">
    <location>
        <position position="55"/>
    </location>
    <ligand>
        <name>ATP</name>
        <dbReference type="ChEBI" id="CHEBI:30616"/>
        <note>allosteric activator</note>
    </ligand>
</feature>
<feature type="binding site" evidence="2">
    <location>
        <position position="91"/>
    </location>
    <ligand>
        <name>ATP</name>
        <dbReference type="ChEBI" id="CHEBI:30616"/>
        <note>allosteric activator</note>
    </ligand>
</feature>
<feature type="binding site" evidence="2">
    <location>
        <position position="209"/>
    </location>
    <ligand>
        <name>GDP</name>
        <dbReference type="ChEBI" id="CHEBI:58189"/>
    </ligand>
</feature>
<feature type="binding site" evidence="2">
    <location>
        <begin position="232"/>
        <end position="234"/>
    </location>
    <ligand>
        <name>dTTP</name>
        <dbReference type="ChEBI" id="CHEBI:37568"/>
        <note>allosteric effector that controls substrate specificity</note>
    </ligand>
</feature>
<feature type="binding site" evidence="2">
    <location>
        <position position="262"/>
    </location>
    <ligand>
        <name>dTTP</name>
        <dbReference type="ChEBI" id="CHEBI:37568"/>
        <note>allosteric effector that controls substrate specificity</note>
    </ligand>
</feature>
<feature type="binding site" evidence="2">
    <location>
        <position position="269"/>
    </location>
    <ligand>
        <name>dTTP</name>
        <dbReference type="ChEBI" id="CHEBI:37568"/>
        <note>allosteric effector that controls substrate specificity</note>
    </ligand>
</feature>
<feature type="binding site" evidence="2">
    <location>
        <position position="437"/>
    </location>
    <ligand>
        <name>GDP</name>
        <dbReference type="ChEBI" id="CHEBI:58189"/>
    </ligand>
</feature>
<feature type="binding site" evidence="2">
    <location>
        <position position="441"/>
    </location>
    <ligand>
        <name>GDP</name>
        <dbReference type="ChEBI" id="CHEBI:58189"/>
    </ligand>
</feature>
<feature type="binding site" evidence="2">
    <location>
        <begin position="623"/>
        <end position="625"/>
    </location>
    <ligand>
        <name>GDP</name>
        <dbReference type="ChEBI" id="CHEBI:58189"/>
    </ligand>
</feature>
<feature type="site" description="Important for hydrogen atom transfer" evidence="1">
    <location>
        <position position="225"/>
    </location>
</feature>
<feature type="site" description="Important for hydrogen atom transfer" evidence="1">
    <location>
        <position position="462"/>
    </location>
</feature>
<feature type="site" description="Important for electron transfer" evidence="1">
    <location>
        <position position="730"/>
    </location>
</feature>
<feature type="site" description="Important for electron transfer" evidence="1">
    <location>
        <position position="731"/>
    </location>
</feature>
<feature type="site" description="Interacts with thioredoxin/glutaredoxin" evidence="1">
    <location>
        <position position="749"/>
    </location>
</feature>
<feature type="site" description="Interacts with thioredoxin/glutaredoxin" evidence="1">
    <location>
        <position position="754"/>
    </location>
</feature>
<feature type="disulfide bond" description="Redox-active" evidence="1">
    <location>
        <begin position="225"/>
        <end position="462"/>
    </location>
</feature>
<proteinExistence type="inferred from homology"/>
<keyword id="KW-0021">Allosteric enzyme</keyword>
<keyword id="KW-0067">ATP-binding</keyword>
<keyword id="KW-0215">Deoxyribonucleotide synthesis</keyword>
<keyword id="KW-1015">Disulfide bond</keyword>
<keyword id="KW-0547">Nucleotide-binding</keyword>
<keyword id="KW-0560">Oxidoreductase</keyword>
<keyword id="KW-1185">Reference proteome</keyword>
<evidence type="ECO:0000250" key="1"/>
<evidence type="ECO:0000250" key="2">
    <source>
        <dbReference type="UniProtKB" id="P00452"/>
    </source>
</evidence>
<evidence type="ECO:0000255" key="3">
    <source>
        <dbReference type="PROSITE-ProRule" id="PRU00492"/>
    </source>
</evidence>
<evidence type="ECO:0000305" key="4"/>